<dbReference type="EC" id="2.1.1.-" evidence="1"/>
<dbReference type="EMBL" id="AL445066">
    <property type="protein sequence ID" value="CAC12106.1"/>
    <property type="molecule type" value="Genomic_DNA"/>
</dbReference>
<dbReference type="RefSeq" id="WP_010901388.1">
    <property type="nucleotide sequence ID" value="NC_002578.1"/>
</dbReference>
<dbReference type="SMR" id="P57704"/>
<dbReference type="FunCoup" id="P57704">
    <property type="interactions" value="59"/>
</dbReference>
<dbReference type="STRING" id="273075.gene:9572195"/>
<dbReference type="PaxDb" id="273075-Ta0977"/>
<dbReference type="EnsemblBacteria" id="CAC12106">
    <property type="protein sequence ID" value="CAC12106"/>
    <property type="gene ID" value="CAC12106"/>
</dbReference>
<dbReference type="KEGG" id="tac:Ta0977"/>
<dbReference type="eggNOG" id="arCOG01876">
    <property type="taxonomic scope" value="Archaea"/>
</dbReference>
<dbReference type="HOGENOM" id="CLU_040013_3_2_2"/>
<dbReference type="InParanoid" id="P57704"/>
<dbReference type="OrthoDB" id="17656at2157"/>
<dbReference type="UniPathway" id="UPA00051"/>
<dbReference type="Proteomes" id="UP000001024">
    <property type="component" value="Chromosome"/>
</dbReference>
<dbReference type="GO" id="GO:0003871">
    <property type="term" value="F:5-methyltetrahydropteroyltriglutamate-homocysteine S-methyltransferase activity"/>
    <property type="evidence" value="ECO:0007669"/>
    <property type="project" value="InterPro"/>
</dbReference>
<dbReference type="GO" id="GO:0008270">
    <property type="term" value="F:zinc ion binding"/>
    <property type="evidence" value="ECO:0007669"/>
    <property type="project" value="InterPro"/>
</dbReference>
<dbReference type="GO" id="GO:0009086">
    <property type="term" value="P:methionine biosynthetic process"/>
    <property type="evidence" value="ECO:0007669"/>
    <property type="project" value="UniProtKB-UniRule"/>
</dbReference>
<dbReference type="GO" id="GO:0032259">
    <property type="term" value="P:methylation"/>
    <property type="evidence" value="ECO:0007669"/>
    <property type="project" value="UniProtKB-KW"/>
</dbReference>
<dbReference type="CDD" id="cd03311">
    <property type="entry name" value="CIMS_C_terminal_like"/>
    <property type="match status" value="1"/>
</dbReference>
<dbReference type="Gene3D" id="3.20.20.210">
    <property type="match status" value="1"/>
</dbReference>
<dbReference type="HAMAP" id="MF_00288">
    <property type="entry name" value="MetE"/>
    <property type="match status" value="1"/>
</dbReference>
<dbReference type="InterPro" id="IPR002629">
    <property type="entry name" value="Met_Synth_C/arc"/>
</dbReference>
<dbReference type="InterPro" id="IPR022921">
    <property type="entry name" value="MetE_arc"/>
</dbReference>
<dbReference type="InterPro" id="IPR038071">
    <property type="entry name" value="UROD/MetE-like_sf"/>
</dbReference>
<dbReference type="NCBIfam" id="NF002272">
    <property type="entry name" value="PRK01207.1"/>
    <property type="match status" value="1"/>
</dbReference>
<dbReference type="PANTHER" id="PTHR30519">
    <property type="entry name" value="5-METHYLTETRAHYDROPTEROYLTRIGLUTAMATE--HOMOCYSTEINE METHYLTRANSFERASE"/>
    <property type="match status" value="1"/>
</dbReference>
<dbReference type="Pfam" id="PF01717">
    <property type="entry name" value="Meth_synt_2"/>
    <property type="match status" value="1"/>
</dbReference>
<dbReference type="SUPFAM" id="SSF51726">
    <property type="entry name" value="UROD/MetE-like"/>
    <property type="match status" value="1"/>
</dbReference>
<reference key="1">
    <citation type="journal article" date="2000" name="Nature">
        <title>The genome sequence of the thermoacidophilic scavenger Thermoplasma acidophilum.</title>
        <authorList>
            <person name="Ruepp A."/>
            <person name="Graml W."/>
            <person name="Santos-Martinez M.-L."/>
            <person name="Koretke K.K."/>
            <person name="Volker C."/>
            <person name="Mewes H.-W."/>
            <person name="Frishman D."/>
            <person name="Stocker S."/>
            <person name="Lupas A.N."/>
            <person name="Baumeister W."/>
        </authorList>
    </citation>
    <scope>NUCLEOTIDE SEQUENCE [LARGE SCALE GENOMIC DNA]</scope>
    <source>
        <strain>ATCC 25905 / DSM 1728 / JCM 9062 / NBRC 15155 / AMRC-C165</strain>
    </source>
</reference>
<accession>P57704</accession>
<accession>Q9HJJ0</accession>
<sequence>MTALITQEIGSFRKPDYLAKEFHKIERTPKFTELAERATRETLEVFERSGLDNIGIGGEMFRWEMYEHPAERIKGIIFYGMVRSFDNRYYRKGSAIDRLERREPFHVDEVKFVAGTTKKPLKVPITGPYTMMEWSFNDYYDSREDLAMEFARIINEELKDIASVWKQVSGGRRLEIQIDEPATTTHPDEMDIVVDSINRSVQGVDGEISMHVCYSSDYRLLYDRIPDLKIDGYNLEYSNRDTLERGLTDDKRVGFQDLKYFAQINESLQRKKFIGIGVTDVHIDYVEPVELIEDRINYALKIIGDPDLVRINPDCGLRTRSREIGEQKLRNMVMARNNILKQL</sequence>
<name>METE_THEAC</name>
<evidence type="ECO:0000255" key="1">
    <source>
        <dbReference type="HAMAP-Rule" id="MF_00288"/>
    </source>
</evidence>
<evidence type="ECO:0000305" key="2"/>
<keyword id="KW-0028">Amino-acid biosynthesis</keyword>
<keyword id="KW-0479">Metal-binding</keyword>
<keyword id="KW-0486">Methionine biosynthesis</keyword>
<keyword id="KW-0489">Methyltransferase</keyword>
<keyword id="KW-1185">Reference proteome</keyword>
<keyword id="KW-0808">Transferase</keyword>
<keyword id="KW-0862">Zinc</keyword>
<protein>
    <recommendedName>
        <fullName evidence="1">Methionine synthase</fullName>
        <ecNumber evidence="1">2.1.1.-</ecNumber>
    </recommendedName>
    <alternativeName>
        <fullName evidence="1">Homocysteine methyltransferase</fullName>
    </alternativeName>
</protein>
<organism>
    <name type="scientific">Thermoplasma acidophilum (strain ATCC 25905 / DSM 1728 / JCM 9062 / NBRC 15155 / AMRC-C165)</name>
    <dbReference type="NCBI Taxonomy" id="273075"/>
    <lineage>
        <taxon>Archaea</taxon>
        <taxon>Methanobacteriati</taxon>
        <taxon>Thermoplasmatota</taxon>
        <taxon>Thermoplasmata</taxon>
        <taxon>Thermoplasmatales</taxon>
        <taxon>Thermoplasmataceae</taxon>
        <taxon>Thermoplasma</taxon>
    </lineage>
</organism>
<comment type="function">
    <text evidence="1">Catalyzes the transfer of a methyl group to L-homocysteine resulting in methionine formation. The physiological methyl donor is unknown.</text>
</comment>
<comment type="cofactor">
    <cofactor evidence="1">
        <name>Zn(2+)</name>
        <dbReference type="ChEBI" id="CHEBI:29105"/>
    </cofactor>
    <text evidence="1">Binds 1 zinc ion per subunit.</text>
</comment>
<comment type="pathway">
    <text evidence="1">Amino-acid biosynthesis; L-methionine biosynthesis via de novo pathway.</text>
</comment>
<comment type="similarity">
    <text evidence="1 2">Belongs to the archaeal MetE family.</text>
</comment>
<gene>
    <name evidence="1" type="primary">metE</name>
    <name type="ordered locus">Ta0977</name>
</gene>
<proteinExistence type="inferred from homology"/>
<feature type="chain" id="PRO_0000098694" description="Methionine synthase">
    <location>
        <begin position="1"/>
        <end position="343"/>
    </location>
</feature>
<feature type="binding site" evidence="1">
    <location>
        <position position="211"/>
    </location>
    <ligand>
        <name>Zn(2+)</name>
        <dbReference type="ChEBI" id="CHEBI:29105"/>
        <note>catalytic</note>
    </ligand>
</feature>
<feature type="binding site" evidence="1">
    <location>
        <position position="213"/>
    </location>
    <ligand>
        <name>Zn(2+)</name>
        <dbReference type="ChEBI" id="CHEBI:29105"/>
        <note>catalytic</note>
    </ligand>
</feature>
<feature type="binding site" evidence="1">
    <location>
        <position position="236"/>
    </location>
    <ligand>
        <name>Zn(2+)</name>
        <dbReference type="ChEBI" id="CHEBI:29105"/>
        <note>catalytic</note>
    </ligand>
</feature>
<feature type="binding site" evidence="1">
    <location>
        <position position="315"/>
    </location>
    <ligand>
        <name>Zn(2+)</name>
        <dbReference type="ChEBI" id="CHEBI:29105"/>
        <note>catalytic</note>
    </ligand>
</feature>